<protein>
    <recommendedName>
        <fullName evidence="1">2-dehydro-3-deoxyphosphooctonate aldolase</fullName>
        <ecNumber evidence="1">2.5.1.55</ecNumber>
    </recommendedName>
    <alternativeName>
        <fullName evidence="1">3-deoxy-D-manno-octulosonic acid 8-phosphate synthase</fullName>
    </alternativeName>
    <alternativeName>
        <fullName evidence="1">KDO-8-phosphate synthase</fullName>
        <shortName evidence="1">KDO 8-P synthase</shortName>
        <shortName evidence="1">KDOPS</shortName>
    </alternativeName>
    <alternativeName>
        <fullName evidence="1">Phospho-2-dehydro-3-deoxyoctonate aldolase</fullName>
    </alternativeName>
</protein>
<accession>Q3KL39</accession>
<reference key="1">
    <citation type="journal article" date="2005" name="Infect. Immun.">
        <title>Comparative genomic analysis of Chlamydia trachomatis oculotropic and genitotropic strains.</title>
        <authorList>
            <person name="Carlson J.H."/>
            <person name="Porcella S.F."/>
            <person name="McClarty G."/>
            <person name="Caldwell H.D."/>
        </authorList>
    </citation>
    <scope>NUCLEOTIDE SEQUENCE [LARGE SCALE GENOMIC DNA]</scope>
    <source>
        <strain>ATCC VR-571B / DSM 19440 / HAR-13</strain>
    </source>
</reference>
<proteinExistence type="inferred from homology"/>
<keyword id="KW-0963">Cytoplasm</keyword>
<keyword id="KW-0448">Lipopolysaccharide biosynthesis</keyword>
<keyword id="KW-0808">Transferase</keyword>
<gene>
    <name evidence="1" type="primary">kdsA</name>
    <name type="ordered locus">CTA_0711</name>
</gene>
<feature type="chain" id="PRO_0000304442" description="2-dehydro-3-deoxyphosphooctonate aldolase">
    <location>
        <begin position="1"/>
        <end position="269"/>
    </location>
</feature>
<sequence length="269" mass="29617">MFPENKMLLIAGPCVIEDNSVFETARRLKEIVAPYASSVHWIFKSSYDKANRSSVHNYRGPGLKLGLQTLAKIKEELDVEILTDVHSPDEAREAAKVCDIIQVPAFLCRQTDLLVTAGETQAIVNIKKGQFLSPWEMQGPIDKVLSTGNNKIILTERGCSFGYNNLVSDMRSIEVLRRFGFPVVFDGTHSVQLPGALHSQSGGQTEFIPVLTRSAIAAGVQGLFIETHPNPSSALSDAASMLSLKDLERLLPAWVQLFTYIQEMDAVSV</sequence>
<evidence type="ECO:0000255" key="1">
    <source>
        <dbReference type="HAMAP-Rule" id="MF_00056"/>
    </source>
</evidence>
<comment type="catalytic activity">
    <reaction evidence="1">
        <text>D-arabinose 5-phosphate + phosphoenolpyruvate + H2O = 3-deoxy-alpha-D-manno-2-octulosonate-8-phosphate + phosphate</text>
        <dbReference type="Rhea" id="RHEA:14053"/>
        <dbReference type="ChEBI" id="CHEBI:15377"/>
        <dbReference type="ChEBI" id="CHEBI:43474"/>
        <dbReference type="ChEBI" id="CHEBI:57693"/>
        <dbReference type="ChEBI" id="CHEBI:58702"/>
        <dbReference type="ChEBI" id="CHEBI:85985"/>
        <dbReference type="EC" id="2.5.1.55"/>
    </reaction>
</comment>
<comment type="pathway">
    <text evidence="1">Carbohydrate biosynthesis; 3-deoxy-D-manno-octulosonate biosynthesis; 3-deoxy-D-manno-octulosonate from D-ribulose 5-phosphate: step 2/3.</text>
</comment>
<comment type="pathway">
    <text evidence="1">Bacterial outer membrane biogenesis; lipopolysaccharide biosynthesis.</text>
</comment>
<comment type="subcellular location">
    <subcellularLocation>
        <location evidence="1">Cytoplasm</location>
    </subcellularLocation>
</comment>
<comment type="similarity">
    <text evidence="1">Belongs to the KdsA family.</text>
</comment>
<dbReference type="EC" id="2.5.1.55" evidence="1"/>
<dbReference type="EMBL" id="CP000051">
    <property type="protein sequence ID" value="AAX50933.1"/>
    <property type="molecule type" value="Genomic_DNA"/>
</dbReference>
<dbReference type="RefSeq" id="WP_009872027.1">
    <property type="nucleotide sequence ID" value="NC_007429.1"/>
</dbReference>
<dbReference type="SMR" id="Q3KL39"/>
<dbReference type="KEGG" id="cta:CTA_0711"/>
<dbReference type="HOGENOM" id="CLU_036666_0_0_0"/>
<dbReference type="UniPathway" id="UPA00030"/>
<dbReference type="UniPathway" id="UPA00357">
    <property type="reaction ID" value="UER00474"/>
</dbReference>
<dbReference type="Proteomes" id="UP000002532">
    <property type="component" value="Chromosome"/>
</dbReference>
<dbReference type="GO" id="GO:0005737">
    <property type="term" value="C:cytoplasm"/>
    <property type="evidence" value="ECO:0007669"/>
    <property type="project" value="UniProtKB-SubCell"/>
</dbReference>
<dbReference type="GO" id="GO:0008676">
    <property type="term" value="F:3-deoxy-8-phosphooctulonate synthase activity"/>
    <property type="evidence" value="ECO:0007669"/>
    <property type="project" value="UniProtKB-UniRule"/>
</dbReference>
<dbReference type="GO" id="GO:0019294">
    <property type="term" value="P:keto-3-deoxy-D-manno-octulosonic acid biosynthetic process"/>
    <property type="evidence" value="ECO:0007669"/>
    <property type="project" value="UniProtKB-UniRule"/>
</dbReference>
<dbReference type="Gene3D" id="3.20.20.70">
    <property type="entry name" value="Aldolase class I"/>
    <property type="match status" value="1"/>
</dbReference>
<dbReference type="HAMAP" id="MF_00056">
    <property type="entry name" value="KDO8P_synth"/>
    <property type="match status" value="1"/>
</dbReference>
<dbReference type="InterPro" id="IPR013785">
    <property type="entry name" value="Aldolase_TIM"/>
</dbReference>
<dbReference type="InterPro" id="IPR006218">
    <property type="entry name" value="DAHP1/KDSA"/>
</dbReference>
<dbReference type="InterPro" id="IPR006269">
    <property type="entry name" value="KDO8P_synthase"/>
</dbReference>
<dbReference type="NCBIfam" id="TIGR01362">
    <property type="entry name" value="KDO8P_synth"/>
    <property type="match status" value="1"/>
</dbReference>
<dbReference type="NCBIfam" id="NF003543">
    <property type="entry name" value="PRK05198.1"/>
    <property type="match status" value="1"/>
</dbReference>
<dbReference type="PANTHER" id="PTHR21057">
    <property type="entry name" value="PHOSPHO-2-DEHYDRO-3-DEOXYHEPTONATE ALDOLASE"/>
    <property type="match status" value="1"/>
</dbReference>
<dbReference type="Pfam" id="PF00793">
    <property type="entry name" value="DAHP_synth_1"/>
    <property type="match status" value="1"/>
</dbReference>
<dbReference type="SUPFAM" id="SSF51569">
    <property type="entry name" value="Aldolase"/>
    <property type="match status" value="1"/>
</dbReference>
<organism>
    <name type="scientific">Chlamydia trachomatis serovar A (strain ATCC VR-571B / DSM 19440 / HAR-13)</name>
    <dbReference type="NCBI Taxonomy" id="315277"/>
    <lineage>
        <taxon>Bacteria</taxon>
        <taxon>Pseudomonadati</taxon>
        <taxon>Chlamydiota</taxon>
        <taxon>Chlamydiia</taxon>
        <taxon>Chlamydiales</taxon>
        <taxon>Chlamydiaceae</taxon>
        <taxon>Chlamydia/Chlamydophila group</taxon>
        <taxon>Chlamydia</taxon>
    </lineage>
</organism>
<name>KDSA_CHLTA</name>